<dbReference type="EMBL" id="CP000046">
    <property type="protein sequence ID" value="AAW37867.1"/>
    <property type="molecule type" value="Genomic_DNA"/>
</dbReference>
<dbReference type="SMR" id="Q5HHS1"/>
<dbReference type="KEGG" id="sac:SACOL0812"/>
<dbReference type="HOGENOM" id="CLU_048251_3_1_9"/>
<dbReference type="Proteomes" id="UP000000530">
    <property type="component" value="Chromosome"/>
</dbReference>
<dbReference type="GO" id="GO:0008289">
    <property type="term" value="F:lipid binding"/>
    <property type="evidence" value="ECO:0007669"/>
    <property type="project" value="UniProtKB-KW"/>
</dbReference>
<dbReference type="Gene3D" id="3.30.1180.10">
    <property type="match status" value="1"/>
</dbReference>
<dbReference type="Gene3D" id="3.40.50.10170">
    <property type="match status" value="1"/>
</dbReference>
<dbReference type="InterPro" id="IPR003797">
    <property type="entry name" value="DegV"/>
</dbReference>
<dbReference type="InterPro" id="IPR043168">
    <property type="entry name" value="DegV_C"/>
</dbReference>
<dbReference type="InterPro" id="IPR050270">
    <property type="entry name" value="DegV_domain_contain"/>
</dbReference>
<dbReference type="NCBIfam" id="TIGR00762">
    <property type="entry name" value="DegV"/>
    <property type="match status" value="1"/>
</dbReference>
<dbReference type="NCBIfam" id="NF038249">
    <property type="entry name" value="fatty_FakB1"/>
    <property type="match status" value="1"/>
</dbReference>
<dbReference type="PANTHER" id="PTHR33434">
    <property type="entry name" value="DEGV DOMAIN-CONTAINING PROTEIN DR_1986-RELATED"/>
    <property type="match status" value="1"/>
</dbReference>
<dbReference type="PANTHER" id="PTHR33434:SF2">
    <property type="entry name" value="FATTY ACID-BINDING PROTEIN TM_1468"/>
    <property type="match status" value="1"/>
</dbReference>
<dbReference type="Pfam" id="PF02645">
    <property type="entry name" value="DegV"/>
    <property type="match status" value="1"/>
</dbReference>
<dbReference type="SUPFAM" id="SSF82549">
    <property type="entry name" value="DAK1/DegV-like"/>
    <property type="match status" value="1"/>
</dbReference>
<dbReference type="PROSITE" id="PS51482">
    <property type="entry name" value="DEGV"/>
    <property type="match status" value="1"/>
</dbReference>
<evidence type="ECO:0000250" key="1"/>
<evidence type="ECO:0000250" key="2">
    <source>
        <dbReference type="UniProtKB" id="Q9X1H9"/>
    </source>
</evidence>
<evidence type="ECO:0000255" key="3">
    <source>
        <dbReference type="PROSITE-ProRule" id="PRU00815"/>
    </source>
</evidence>
<proteinExistence type="inferred from homology"/>
<comment type="function">
    <text evidence="1">May bind long-chain fatty acids, such as palmitate, and may play a role in lipid transport or fatty acid metabolism.</text>
</comment>
<keyword id="KW-0446">Lipid-binding</keyword>
<reference key="1">
    <citation type="journal article" date="2005" name="J. Bacteriol.">
        <title>Insights on evolution of virulence and resistance from the complete genome analysis of an early methicillin-resistant Staphylococcus aureus strain and a biofilm-producing methicillin-resistant Staphylococcus epidermidis strain.</title>
        <authorList>
            <person name="Gill S.R."/>
            <person name="Fouts D.E."/>
            <person name="Archer G.L."/>
            <person name="Mongodin E.F."/>
            <person name="DeBoy R.T."/>
            <person name="Ravel J."/>
            <person name="Paulsen I.T."/>
            <person name="Kolonay J.F."/>
            <person name="Brinkac L.M."/>
            <person name="Beanan M.J."/>
            <person name="Dodson R.J."/>
            <person name="Daugherty S.C."/>
            <person name="Madupu R."/>
            <person name="Angiuoli S.V."/>
            <person name="Durkin A.S."/>
            <person name="Haft D.H."/>
            <person name="Vamathevan J.J."/>
            <person name="Khouri H."/>
            <person name="Utterback T.R."/>
            <person name="Lee C."/>
            <person name="Dimitrov G."/>
            <person name="Jiang L."/>
            <person name="Qin H."/>
            <person name="Weidman J."/>
            <person name="Tran K."/>
            <person name="Kang K.H."/>
            <person name="Hance I.R."/>
            <person name="Nelson K.E."/>
            <person name="Fraser C.M."/>
        </authorList>
    </citation>
    <scope>NUCLEOTIDE SEQUENCE [LARGE SCALE GENOMIC DNA]</scope>
    <source>
        <strain>COL</strain>
    </source>
</reference>
<sequence>MKIAVMTDSTSYLSQDLIDKYNIQIAPLSVTFDDGKNFTESNEIAIEEFYNKMASSQTIPTTSQPAIGEWITKYEMLRDQGYTDIIVICLSSGISGSYQSSYQAGEMVEGVNVHAFDSKLAAMIEGCYVLRAIEMVEEGYEPQQIIDDLTNMREHTGAYLIVDDLKNLQKSGRITGAQAWVGTLLKMKPVLKFEDGKIIPEEKVRTKKRAIQTLEKKVLDIVKDFEEVTLFVINGDHFEDGQALYKKLQDDCPSAYQVAYSEFGPVVAAHLGSGGLGLGYVGRKIRLT</sequence>
<feature type="chain" id="PRO_0000209780" description="DegV domain-containing protein SACOL0812">
    <location>
        <begin position="1"/>
        <end position="288"/>
    </location>
</feature>
<feature type="domain" description="DegV" evidence="3">
    <location>
        <begin position="3"/>
        <end position="282"/>
    </location>
</feature>
<feature type="binding site" evidence="2">
    <location>
        <position position="62"/>
    </location>
    <ligand>
        <name>hexadecanoate</name>
        <dbReference type="ChEBI" id="CHEBI:7896"/>
    </ligand>
</feature>
<feature type="binding site" evidence="2">
    <location>
        <position position="95"/>
    </location>
    <ligand>
        <name>hexadecanoate</name>
        <dbReference type="ChEBI" id="CHEBI:7896"/>
    </ligand>
</feature>
<gene>
    <name type="ordered locus">SACOL0812</name>
</gene>
<name>Y812_STAAC</name>
<protein>
    <recommendedName>
        <fullName>DegV domain-containing protein SACOL0812</fullName>
    </recommendedName>
</protein>
<accession>Q5HHS1</accession>
<organism>
    <name type="scientific">Staphylococcus aureus (strain COL)</name>
    <dbReference type="NCBI Taxonomy" id="93062"/>
    <lineage>
        <taxon>Bacteria</taxon>
        <taxon>Bacillati</taxon>
        <taxon>Bacillota</taxon>
        <taxon>Bacilli</taxon>
        <taxon>Bacillales</taxon>
        <taxon>Staphylococcaceae</taxon>
        <taxon>Staphylococcus</taxon>
    </lineage>
</organism>